<keyword id="KW-0045">Antibiotic biosynthesis</keyword>
<organism>
    <name type="scientific">Streptomyces virginiae</name>
    <name type="common">Streptomyces cinnamonensis</name>
    <dbReference type="NCBI Taxonomy" id="1961"/>
    <lineage>
        <taxon>Bacteria</taxon>
        <taxon>Bacillati</taxon>
        <taxon>Actinomycetota</taxon>
        <taxon>Actinomycetes</taxon>
        <taxon>Kitasatosporales</taxon>
        <taxon>Streptomycetaceae</taxon>
        <taxon>Streptomyces</taxon>
    </lineage>
</organism>
<name>CYPK_STRVG</name>
<proteinExistence type="predicted"/>
<protein>
    <recommendedName>
        <fullName>Granaticin polyketide synthase bifunctional cyclase/dehydratase</fullName>
    </recommendedName>
    <alternativeName>
        <fullName>ORF4</fullName>
    </alternativeName>
</protein>
<accession>P41178</accession>
<sequence>MTTRQVEHEYTIGAPAATVYRLLADVSHWPQIFPPTIHVERQATGAHQERIHIWATANGQAKNWTSRRTLDPEALRIDSASEVTTAPVAAMGGTWIVEPLGADSSRIRLLHDSGPSPRPQDLQWIDRAVDTTRHLELAALATTSNHAHAAEERELLSFTDTCTIDGAAKDVFDFVNEADRWPERLPHVATVRFEEPAPGLQILEMDTRAKDGSVHTTKSYRVALDTRKIAYKQVTLPALMTLHTGVWTFTRRPGHHRGELAAHRLHQHANIAKIPRRAGQVADARDYVHSALSTNSRAPWASQG</sequence>
<comment type="function">
    <text>Is needed for correct cyclization of the oligoketide leading to isochromanequinone formation.</text>
</comment>
<comment type="pathway">
    <text>Antifungal biosynthesis; monensin biosynthesis.</text>
</comment>
<feature type="chain" id="PRO_0000079759" description="Granaticin polyketide synthase bifunctional cyclase/dehydratase">
    <location>
        <begin position="1"/>
        <end position="304"/>
    </location>
</feature>
<reference key="1">
    <citation type="journal article" date="1992" name="Mol. Gen. Genet.">
        <title>Characterisation of actI-homologous DNA encoding polyketide synthase genes from the monensin producer Streptomyces cinnamonensis.</title>
        <authorList>
            <person name="Arrowsmith T.J."/>
            <person name="Malpartida F."/>
            <person name="Sherman D.H."/>
            <person name="Birch A."/>
            <person name="Hopwood D.A."/>
            <person name="Robinson J.A."/>
        </authorList>
    </citation>
    <scope>NUCLEOTIDE SEQUENCE [GENOMIC DNA]</scope>
    <source>
        <strain>A3823.5</strain>
    </source>
</reference>
<dbReference type="EMBL" id="Z11511">
    <property type="protein sequence ID" value="CAA77600.1"/>
    <property type="molecule type" value="Genomic_DNA"/>
</dbReference>
<dbReference type="PIR" id="S25080">
    <property type="entry name" value="S25080"/>
</dbReference>
<dbReference type="SMR" id="P41178"/>
<dbReference type="UniPathway" id="UPA00178"/>
<dbReference type="GO" id="GO:0017000">
    <property type="term" value="P:antibiotic biosynthetic process"/>
    <property type="evidence" value="ECO:0007669"/>
    <property type="project" value="UniProtKB-KW"/>
</dbReference>
<dbReference type="CDD" id="cd08861">
    <property type="entry name" value="OtcD1_ARO-CYC_like"/>
    <property type="match status" value="2"/>
</dbReference>
<dbReference type="Gene3D" id="3.30.530.20">
    <property type="match status" value="2"/>
</dbReference>
<dbReference type="InterPro" id="IPR019587">
    <property type="entry name" value="Polyketide_cyclase/dehydratase"/>
</dbReference>
<dbReference type="InterPro" id="IPR023393">
    <property type="entry name" value="START-like_dom_sf"/>
</dbReference>
<dbReference type="Pfam" id="PF10604">
    <property type="entry name" value="Polyketide_cyc2"/>
    <property type="match status" value="1"/>
</dbReference>
<dbReference type="SUPFAM" id="SSF55961">
    <property type="entry name" value="Bet v1-like"/>
    <property type="match status" value="2"/>
</dbReference>